<proteinExistence type="inferred from homology"/>
<dbReference type="EMBL" id="CP001581">
    <property type="protein sequence ID" value="ACO87254.1"/>
    <property type="molecule type" value="Genomic_DNA"/>
</dbReference>
<dbReference type="RefSeq" id="WP_003357518.1">
    <property type="nucleotide sequence ID" value="NC_012563.1"/>
</dbReference>
<dbReference type="SMR" id="C1FMV0"/>
<dbReference type="GeneID" id="5187777"/>
<dbReference type="KEGG" id="cby:CLM_3947"/>
<dbReference type="eggNOG" id="COG0088">
    <property type="taxonomic scope" value="Bacteria"/>
</dbReference>
<dbReference type="HOGENOM" id="CLU_041575_5_2_9"/>
<dbReference type="Proteomes" id="UP000001374">
    <property type="component" value="Chromosome"/>
</dbReference>
<dbReference type="GO" id="GO:1990904">
    <property type="term" value="C:ribonucleoprotein complex"/>
    <property type="evidence" value="ECO:0007669"/>
    <property type="project" value="UniProtKB-KW"/>
</dbReference>
<dbReference type="GO" id="GO:0005840">
    <property type="term" value="C:ribosome"/>
    <property type="evidence" value="ECO:0007669"/>
    <property type="project" value="UniProtKB-KW"/>
</dbReference>
<dbReference type="GO" id="GO:0019843">
    <property type="term" value="F:rRNA binding"/>
    <property type="evidence" value="ECO:0007669"/>
    <property type="project" value="UniProtKB-UniRule"/>
</dbReference>
<dbReference type="GO" id="GO:0003735">
    <property type="term" value="F:structural constituent of ribosome"/>
    <property type="evidence" value="ECO:0007669"/>
    <property type="project" value="InterPro"/>
</dbReference>
<dbReference type="GO" id="GO:0006412">
    <property type="term" value="P:translation"/>
    <property type="evidence" value="ECO:0007669"/>
    <property type="project" value="UniProtKB-UniRule"/>
</dbReference>
<dbReference type="FunFam" id="3.40.1370.10:FF:000003">
    <property type="entry name" value="50S ribosomal protein L4"/>
    <property type="match status" value="1"/>
</dbReference>
<dbReference type="Gene3D" id="3.40.1370.10">
    <property type="match status" value="1"/>
</dbReference>
<dbReference type="HAMAP" id="MF_01328_B">
    <property type="entry name" value="Ribosomal_uL4_B"/>
    <property type="match status" value="1"/>
</dbReference>
<dbReference type="InterPro" id="IPR002136">
    <property type="entry name" value="Ribosomal_uL4"/>
</dbReference>
<dbReference type="InterPro" id="IPR013005">
    <property type="entry name" value="Ribosomal_uL4-like"/>
</dbReference>
<dbReference type="InterPro" id="IPR023574">
    <property type="entry name" value="Ribosomal_uL4_dom_sf"/>
</dbReference>
<dbReference type="NCBIfam" id="TIGR03953">
    <property type="entry name" value="rplD_bact"/>
    <property type="match status" value="1"/>
</dbReference>
<dbReference type="PANTHER" id="PTHR10746">
    <property type="entry name" value="50S RIBOSOMAL PROTEIN L4"/>
    <property type="match status" value="1"/>
</dbReference>
<dbReference type="PANTHER" id="PTHR10746:SF6">
    <property type="entry name" value="LARGE RIBOSOMAL SUBUNIT PROTEIN UL4M"/>
    <property type="match status" value="1"/>
</dbReference>
<dbReference type="Pfam" id="PF00573">
    <property type="entry name" value="Ribosomal_L4"/>
    <property type="match status" value="1"/>
</dbReference>
<dbReference type="SUPFAM" id="SSF52166">
    <property type="entry name" value="Ribosomal protein L4"/>
    <property type="match status" value="1"/>
</dbReference>
<gene>
    <name evidence="1" type="primary">rplD</name>
    <name type="ordered locus">CLM_3947</name>
</gene>
<organism>
    <name type="scientific">Clostridium botulinum (strain Kyoto / Type A2)</name>
    <dbReference type="NCBI Taxonomy" id="536232"/>
    <lineage>
        <taxon>Bacteria</taxon>
        <taxon>Bacillati</taxon>
        <taxon>Bacillota</taxon>
        <taxon>Clostridia</taxon>
        <taxon>Eubacteriales</taxon>
        <taxon>Clostridiaceae</taxon>
        <taxon>Clostridium</taxon>
    </lineage>
</organism>
<reference key="1">
    <citation type="submission" date="2008-10" db="EMBL/GenBank/DDBJ databases">
        <title>Genome sequence of Clostridium botulinum A2 Kyoto.</title>
        <authorList>
            <person name="Shrivastava S."/>
            <person name="Brinkac L.M."/>
            <person name="Brown J.L."/>
            <person name="Bruce D."/>
            <person name="Detter C.C."/>
            <person name="Johnson E.A."/>
            <person name="Munk C.A."/>
            <person name="Smith L.A."/>
            <person name="Smith T.J."/>
            <person name="Sutton G."/>
            <person name="Brettin T.S."/>
        </authorList>
    </citation>
    <scope>NUCLEOTIDE SEQUENCE [LARGE SCALE GENOMIC DNA]</scope>
    <source>
        <strain>Kyoto / Type A2</strain>
    </source>
</reference>
<protein>
    <recommendedName>
        <fullName evidence="1">Large ribosomal subunit protein uL4</fullName>
    </recommendedName>
    <alternativeName>
        <fullName evidence="3">50S ribosomal protein L4</fullName>
    </alternativeName>
</protein>
<sequence>MPKVDLFNQNGEKVGDLQLADSVFGVEVNTYAMHQVVKALLANKRQGTQSAKTRAEVSGGGIKPWRQKGTGRARQGSIRAPQWIHGGVVFAPKPRDYRMSIPKSMKKVAIKSALTSKVNENLMVVVDEIKLETPKTKEVVKMLNSFNAKKTLIITNNAEENVYKSARNIEGVQIIPVNNINVYDVLKYDKVVITKDAVSKIEEVYA</sequence>
<evidence type="ECO:0000255" key="1">
    <source>
        <dbReference type="HAMAP-Rule" id="MF_01328"/>
    </source>
</evidence>
<evidence type="ECO:0000256" key="2">
    <source>
        <dbReference type="SAM" id="MobiDB-lite"/>
    </source>
</evidence>
<evidence type="ECO:0000305" key="3"/>
<comment type="function">
    <text evidence="1">One of the primary rRNA binding proteins, this protein initially binds near the 5'-end of the 23S rRNA. It is important during the early stages of 50S assembly. It makes multiple contacts with different domains of the 23S rRNA in the assembled 50S subunit and ribosome.</text>
</comment>
<comment type="function">
    <text evidence="1">Forms part of the polypeptide exit tunnel.</text>
</comment>
<comment type="subunit">
    <text evidence="1">Part of the 50S ribosomal subunit.</text>
</comment>
<comment type="similarity">
    <text evidence="1">Belongs to the universal ribosomal protein uL4 family.</text>
</comment>
<accession>C1FMV0</accession>
<keyword id="KW-0687">Ribonucleoprotein</keyword>
<keyword id="KW-0689">Ribosomal protein</keyword>
<keyword id="KW-0694">RNA-binding</keyword>
<keyword id="KW-0699">rRNA-binding</keyword>
<name>RL4_CLOBJ</name>
<feature type="chain" id="PRO_1000165996" description="Large ribosomal subunit protein uL4">
    <location>
        <begin position="1"/>
        <end position="206"/>
    </location>
</feature>
<feature type="region of interest" description="Disordered" evidence="2">
    <location>
        <begin position="47"/>
        <end position="75"/>
    </location>
</feature>